<dbReference type="EMBL" id="AE006470">
    <property type="protein sequence ID" value="AAM72490.1"/>
    <property type="molecule type" value="Genomic_DNA"/>
</dbReference>
<dbReference type="RefSeq" id="NP_662148.1">
    <property type="nucleotide sequence ID" value="NC_002932.3"/>
</dbReference>
<dbReference type="RefSeq" id="WP_010932929.1">
    <property type="nucleotide sequence ID" value="NC_002932.3"/>
</dbReference>
<dbReference type="SMR" id="Q8KCZ7"/>
<dbReference type="STRING" id="194439.CT1260"/>
<dbReference type="EnsemblBacteria" id="AAM72490">
    <property type="protein sequence ID" value="AAM72490"/>
    <property type="gene ID" value="CT1260"/>
</dbReference>
<dbReference type="KEGG" id="cte:CT1260"/>
<dbReference type="PATRIC" id="fig|194439.7.peg.1148"/>
<dbReference type="eggNOG" id="COG1145">
    <property type="taxonomic scope" value="Bacteria"/>
</dbReference>
<dbReference type="HOGENOM" id="CLU_139698_11_0_10"/>
<dbReference type="OrthoDB" id="9803397at2"/>
<dbReference type="Proteomes" id="UP000001007">
    <property type="component" value="Chromosome"/>
</dbReference>
<dbReference type="GO" id="GO:0051539">
    <property type="term" value="F:4 iron, 4 sulfur cluster binding"/>
    <property type="evidence" value="ECO:0007669"/>
    <property type="project" value="UniProtKB-KW"/>
</dbReference>
<dbReference type="GO" id="GO:0046872">
    <property type="term" value="F:metal ion binding"/>
    <property type="evidence" value="ECO:0007669"/>
    <property type="project" value="UniProtKB-KW"/>
</dbReference>
<dbReference type="FunFam" id="3.30.70.20:FF:000045">
    <property type="entry name" value="Ferredoxin, 4Fe-4S"/>
    <property type="match status" value="1"/>
</dbReference>
<dbReference type="Gene3D" id="3.30.70.20">
    <property type="match status" value="1"/>
</dbReference>
<dbReference type="InterPro" id="IPR017896">
    <property type="entry name" value="4Fe4S_Fe-S-bd"/>
</dbReference>
<dbReference type="InterPro" id="IPR017900">
    <property type="entry name" value="4Fe4S_Fe_S_CS"/>
</dbReference>
<dbReference type="Pfam" id="PF00037">
    <property type="entry name" value="Fer4"/>
    <property type="match status" value="1"/>
</dbReference>
<dbReference type="SUPFAM" id="SSF54862">
    <property type="entry name" value="4Fe-4S ferredoxins"/>
    <property type="match status" value="1"/>
</dbReference>
<dbReference type="PROSITE" id="PS00198">
    <property type="entry name" value="4FE4S_FER_1"/>
    <property type="match status" value="1"/>
</dbReference>
<dbReference type="PROSITE" id="PS51379">
    <property type="entry name" value="4FE4S_FER_2"/>
    <property type="match status" value="2"/>
</dbReference>
<keyword id="KW-0004">4Fe-4S</keyword>
<keyword id="KW-0249">Electron transport</keyword>
<keyword id="KW-0408">Iron</keyword>
<keyword id="KW-0411">Iron-sulfur</keyword>
<keyword id="KW-0479">Metal-binding</keyword>
<keyword id="KW-1185">Reference proteome</keyword>
<keyword id="KW-0677">Repeat</keyword>
<keyword id="KW-0813">Transport</keyword>
<proteinExistence type="inferred from homology"/>
<sequence>MAHRITDECTYCAACEPECPVSAISAGDSIYVIDENVCVDCIGYHDEPACVAVCPVDCIIKV</sequence>
<accession>Q8KCZ7</accession>
<gene>
    <name type="ordered locus">CT1260</name>
</gene>
<organism>
    <name type="scientific">Chlorobaculum tepidum (strain ATCC 49652 / DSM 12025 / NBRC 103806 / TLS)</name>
    <name type="common">Chlorobium tepidum</name>
    <dbReference type="NCBI Taxonomy" id="194439"/>
    <lineage>
        <taxon>Bacteria</taxon>
        <taxon>Pseudomonadati</taxon>
        <taxon>Chlorobiota</taxon>
        <taxon>Chlorobiia</taxon>
        <taxon>Chlorobiales</taxon>
        <taxon>Chlorobiaceae</taxon>
        <taxon>Chlorobaculum</taxon>
    </lineage>
</organism>
<evidence type="ECO:0000250" key="1"/>
<evidence type="ECO:0000255" key="2">
    <source>
        <dbReference type="PROSITE-ProRule" id="PRU00711"/>
    </source>
</evidence>
<feature type="initiator methionine" description="Removed" evidence="1">
    <location>
        <position position="1"/>
    </location>
</feature>
<feature type="chain" id="PRO_0000159125" description="Ferredoxin-2">
    <location>
        <begin position="2"/>
        <end position="62"/>
    </location>
</feature>
<feature type="domain" description="4Fe-4S ferredoxin-type 1" evidence="2">
    <location>
        <begin position="2"/>
        <end position="28"/>
    </location>
</feature>
<feature type="domain" description="4Fe-4S ferredoxin-type 2" evidence="2">
    <location>
        <begin position="29"/>
        <end position="62"/>
    </location>
</feature>
<feature type="binding site" evidence="1">
    <location>
        <position position="9"/>
    </location>
    <ligand>
        <name>[4Fe-4S] cluster</name>
        <dbReference type="ChEBI" id="CHEBI:49883"/>
        <label>1</label>
    </ligand>
</feature>
<feature type="binding site" evidence="1">
    <location>
        <position position="12"/>
    </location>
    <ligand>
        <name>[4Fe-4S] cluster</name>
        <dbReference type="ChEBI" id="CHEBI:49883"/>
        <label>1</label>
    </ligand>
</feature>
<feature type="binding site" evidence="1">
    <location>
        <position position="15"/>
    </location>
    <ligand>
        <name>[4Fe-4S] cluster</name>
        <dbReference type="ChEBI" id="CHEBI:49883"/>
        <label>1</label>
    </ligand>
</feature>
<feature type="binding site" evidence="1">
    <location>
        <position position="19"/>
    </location>
    <ligand>
        <name>[4Fe-4S] cluster</name>
        <dbReference type="ChEBI" id="CHEBI:49883"/>
        <label>2</label>
    </ligand>
</feature>
<feature type="binding site" evidence="1">
    <location>
        <position position="38"/>
    </location>
    <ligand>
        <name>[4Fe-4S] cluster</name>
        <dbReference type="ChEBI" id="CHEBI:49883"/>
        <label>2</label>
    </ligand>
</feature>
<feature type="binding site" evidence="1">
    <location>
        <position position="41"/>
    </location>
    <ligand>
        <name>[4Fe-4S] cluster</name>
        <dbReference type="ChEBI" id="CHEBI:49883"/>
        <label>2</label>
    </ligand>
</feature>
<feature type="binding site" evidence="1">
    <location>
        <position position="50"/>
    </location>
    <ligand>
        <name>[4Fe-4S] cluster</name>
        <dbReference type="ChEBI" id="CHEBI:49883"/>
        <label>2</label>
    </ligand>
</feature>
<feature type="binding site" evidence="1">
    <location>
        <position position="54"/>
    </location>
    <ligand>
        <name>[4Fe-4S] cluster</name>
        <dbReference type="ChEBI" id="CHEBI:49883"/>
        <label>1</label>
    </ligand>
</feature>
<comment type="function">
    <text>Ferredoxins are iron-sulfur proteins that transfer electrons in a wide variety of metabolic reactions.</text>
</comment>
<comment type="cofactor">
    <cofactor>
        <name>[4Fe-4S] cluster</name>
        <dbReference type="ChEBI" id="CHEBI:49883"/>
    </cofactor>
    <text>Binds 2 [4Fe-4S] clusters.</text>
</comment>
<protein>
    <recommendedName>
        <fullName>Ferredoxin-2</fullName>
    </recommendedName>
    <alternativeName>
        <fullName>Ferredoxin II</fullName>
        <shortName>FdII</shortName>
    </alternativeName>
</protein>
<name>FER2_CHLTE</name>
<reference key="1">
    <citation type="journal article" date="2002" name="Proc. Natl. Acad. Sci. U.S.A.">
        <title>The complete genome sequence of Chlorobium tepidum TLS, a photosynthetic, anaerobic, green-sulfur bacterium.</title>
        <authorList>
            <person name="Eisen J.A."/>
            <person name="Nelson K.E."/>
            <person name="Paulsen I.T."/>
            <person name="Heidelberg J.F."/>
            <person name="Wu M."/>
            <person name="Dodson R.J."/>
            <person name="DeBoy R.T."/>
            <person name="Gwinn M.L."/>
            <person name="Nelson W.C."/>
            <person name="Haft D.H."/>
            <person name="Hickey E.K."/>
            <person name="Peterson J.D."/>
            <person name="Durkin A.S."/>
            <person name="Kolonay J.F."/>
            <person name="Yang F."/>
            <person name="Holt I.E."/>
            <person name="Umayam L.A."/>
            <person name="Mason T.M."/>
            <person name="Brenner M."/>
            <person name="Shea T.P."/>
            <person name="Parksey D.S."/>
            <person name="Nierman W.C."/>
            <person name="Feldblyum T.V."/>
            <person name="Hansen C.L."/>
            <person name="Craven M.B."/>
            <person name="Radune D."/>
            <person name="Vamathevan J.J."/>
            <person name="Khouri H.M."/>
            <person name="White O."/>
            <person name="Gruber T.M."/>
            <person name="Ketchum K.A."/>
            <person name="Venter J.C."/>
            <person name="Tettelin H."/>
            <person name="Bryant D.A."/>
            <person name="Fraser C.M."/>
        </authorList>
    </citation>
    <scope>NUCLEOTIDE SEQUENCE [LARGE SCALE GENOMIC DNA]</scope>
    <source>
        <strain>ATCC 49652 / DSM 12025 / NBRC 103806 / TLS</strain>
    </source>
</reference>